<proteinExistence type="inferred from homology"/>
<feature type="chain" id="PRO_1000003733" description="Nucleoid-associated protein DIP0260">
    <location>
        <begin position="1"/>
        <end position="106"/>
    </location>
</feature>
<sequence>MTQPDMSQILAQAQQMQAKLQEAQREILATTVTGTAGNGLVSIDMQGNGMVSSVTIDPKVVDADDVETLQDLLVGAFAEAHEKLGTLAEQKMGPLSQGFDGLGGMF</sequence>
<name>Y260_CORDI</name>
<gene>
    <name type="ordered locus">DIP0260</name>
</gene>
<keyword id="KW-0963">Cytoplasm</keyword>
<keyword id="KW-0238">DNA-binding</keyword>
<keyword id="KW-1185">Reference proteome</keyword>
<comment type="function">
    <text evidence="1">Binds to DNA and alters its conformation. May be involved in regulation of gene expression, nucleoid organization and DNA protection.</text>
</comment>
<comment type="subunit">
    <text evidence="1">Homodimer.</text>
</comment>
<comment type="subcellular location">
    <subcellularLocation>
        <location evidence="1">Cytoplasm</location>
        <location evidence="1">Nucleoid</location>
    </subcellularLocation>
</comment>
<comment type="similarity">
    <text evidence="1">Belongs to the YbaB/EbfC family.</text>
</comment>
<protein>
    <recommendedName>
        <fullName evidence="1">Nucleoid-associated protein DIP0260</fullName>
    </recommendedName>
</protein>
<organism>
    <name type="scientific">Corynebacterium diphtheriae (strain ATCC 700971 / NCTC 13129 / Biotype gravis)</name>
    <dbReference type="NCBI Taxonomy" id="257309"/>
    <lineage>
        <taxon>Bacteria</taxon>
        <taxon>Bacillati</taxon>
        <taxon>Actinomycetota</taxon>
        <taxon>Actinomycetes</taxon>
        <taxon>Mycobacteriales</taxon>
        <taxon>Corynebacteriaceae</taxon>
        <taxon>Corynebacterium</taxon>
    </lineage>
</organism>
<reference key="1">
    <citation type="journal article" date="2003" name="Nucleic Acids Res.">
        <title>The complete genome sequence and analysis of Corynebacterium diphtheriae NCTC13129.</title>
        <authorList>
            <person name="Cerdeno-Tarraga A.-M."/>
            <person name="Efstratiou A."/>
            <person name="Dover L.G."/>
            <person name="Holden M.T.G."/>
            <person name="Pallen M.J."/>
            <person name="Bentley S.D."/>
            <person name="Besra G.S."/>
            <person name="Churcher C.M."/>
            <person name="James K.D."/>
            <person name="De Zoysa A."/>
            <person name="Chillingworth T."/>
            <person name="Cronin A."/>
            <person name="Dowd L."/>
            <person name="Feltwell T."/>
            <person name="Hamlin N."/>
            <person name="Holroyd S."/>
            <person name="Jagels K."/>
            <person name="Moule S."/>
            <person name="Quail M.A."/>
            <person name="Rabbinowitsch E."/>
            <person name="Rutherford K.M."/>
            <person name="Thomson N.R."/>
            <person name="Unwin L."/>
            <person name="Whitehead S."/>
            <person name="Barrell B.G."/>
            <person name="Parkhill J."/>
        </authorList>
    </citation>
    <scope>NUCLEOTIDE SEQUENCE [LARGE SCALE GENOMIC DNA]</scope>
    <source>
        <strain>ATCC 700971 / NCTC 13129 / Biotype gravis</strain>
    </source>
</reference>
<accession>Q6NJY1</accession>
<dbReference type="EMBL" id="BX248354">
    <property type="protein sequence ID" value="CAE48765.1"/>
    <property type="molecule type" value="Genomic_DNA"/>
</dbReference>
<dbReference type="RefSeq" id="WP_003850338.1">
    <property type="nucleotide sequence ID" value="NC_002935.2"/>
</dbReference>
<dbReference type="SMR" id="Q6NJY1"/>
<dbReference type="STRING" id="257309.DIP0260"/>
<dbReference type="KEGG" id="cdi:DIP0260"/>
<dbReference type="HOGENOM" id="CLU_140930_4_1_11"/>
<dbReference type="Proteomes" id="UP000002198">
    <property type="component" value="Chromosome"/>
</dbReference>
<dbReference type="GO" id="GO:0043590">
    <property type="term" value="C:bacterial nucleoid"/>
    <property type="evidence" value="ECO:0007669"/>
    <property type="project" value="UniProtKB-UniRule"/>
</dbReference>
<dbReference type="GO" id="GO:0005829">
    <property type="term" value="C:cytosol"/>
    <property type="evidence" value="ECO:0007669"/>
    <property type="project" value="TreeGrafter"/>
</dbReference>
<dbReference type="GO" id="GO:0003677">
    <property type="term" value="F:DNA binding"/>
    <property type="evidence" value="ECO:0007669"/>
    <property type="project" value="UniProtKB-UniRule"/>
</dbReference>
<dbReference type="Gene3D" id="3.30.1310.10">
    <property type="entry name" value="Nucleoid-associated protein YbaB-like domain"/>
    <property type="match status" value="1"/>
</dbReference>
<dbReference type="HAMAP" id="MF_00274">
    <property type="entry name" value="DNA_YbaB_EbfC"/>
    <property type="match status" value="1"/>
</dbReference>
<dbReference type="InterPro" id="IPR036894">
    <property type="entry name" value="YbaB-like_sf"/>
</dbReference>
<dbReference type="InterPro" id="IPR004401">
    <property type="entry name" value="YbaB/EbfC"/>
</dbReference>
<dbReference type="NCBIfam" id="TIGR00103">
    <property type="entry name" value="DNA_YbaB_EbfC"/>
    <property type="match status" value="1"/>
</dbReference>
<dbReference type="PANTHER" id="PTHR33449">
    <property type="entry name" value="NUCLEOID-ASSOCIATED PROTEIN YBAB"/>
    <property type="match status" value="1"/>
</dbReference>
<dbReference type="PANTHER" id="PTHR33449:SF1">
    <property type="entry name" value="NUCLEOID-ASSOCIATED PROTEIN YBAB"/>
    <property type="match status" value="1"/>
</dbReference>
<dbReference type="Pfam" id="PF02575">
    <property type="entry name" value="YbaB_DNA_bd"/>
    <property type="match status" value="1"/>
</dbReference>
<dbReference type="PIRSF" id="PIRSF004555">
    <property type="entry name" value="UCP004555"/>
    <property type="match status" value="1"/>
</dbReference>
<dbReference type="SUPFAM" id="SSF82607">
    <property type="entry name" value="YbaB-like"/>
    <property type="match status" value="1"/>
</dbReference>
<evidence type="ECO:0000255" key="1">
    <source>
        <dbReference type="HAMAP-Rule" id="MF_00274"/>
    </source>
</evidence>